<reference key="1">
    <citation type="journal article" date="2003" name="Mol. Microbiol.">
        <title>Genome-based analysis of virulence genes in a non-biofilm-forming Staphylococcus epidermidis strain (ATCC 12228).</title>
        <authorList>
            <person name="Zhang Y.-Q."/>
            <person name="Ren S.-X."/>
            <person name="Li H.-L."/>
            <person name="Wang Y.-X."/>
            <person name="Fu G."/>
            <person name="Yang J."/>
            <person name="Qin Z.-Q."/>
            <person name="Miao Y.-G."/>
            <person name="Wang W.-Y."/>
            <person name="Chen R.-S."/>
            <person name="Shen Y."/>
            <person name="Chen Z."/>
            <person name="Yuan Z.-H."/>
            <person name="Zhao G.-P."/>
            <person name="Qu D."/>
            <person name="Danchin A."/>
            <person name="Wen Y.-M."/>
        </authorList>
    </citation>
    <scope>NUCLEOTIDE SEQUENCE [LARGE SCALE GENOMIC DNA]</scope>
    <source>
        <strain>ATCC 12228 / FDA PCI 1200</strain>
    </source>
</reference>
<keyword id="KW-0963">Cytoplasm</keyword>
<keyword id="KW-0324">Glycolysis</keyword>
<keyword id="KW-0520">NAD</keyword>
<keyword id="KW-0547">Nucleotide-binding</keyword>
<keyword id="KW-0560">Oxidoreductase</keyword>
<comment type="function">
    <text evidence="2">Catalyzes the oxidative phosphorylation of glyceraldehyde 3-phosphate (G3P) to 1,3-bisphosphoglycerate (BPG) using the cofactor NAD. The first reaction step involves the formation of a hemiacetal intermediate between G3P and a cysteine residue, and this hemiacetal intermediate is then oxidized to a thioester, with concomitant reduction of NAD to NADH. The reduced NADH is then exchanged with the second NAD, and the thioester is attacked by a nucleophilic inorganic phosphate to produce BPG.</text>
</comment>
<comment type="catalytic activity">
    <reaction evidence="2">
        <text>D-glyceraldehyde 3-phosphate + phosphate + NAD(+) = (2R)-3-phospho-glyceroyl phosphate + NADH + H(+)</text>
        <dbReference type="Rhea" id="RHEA:10300"/>
        <dbReference type="ChEBI" id="CHEBI:15378"/>
        <dbReference type="ChEBI" id="CHEBI:43474"/>
        <dbReference type="ChEBI" id="CHEBI:57540"/>
        <dbReference type="ChEBI" id="CHEBI:57604"/>
        <dbReference type="ChEBI" id="CHEBI:57945"/>
        <dbReference type="ChEBI" id="CHEBI:59776"/>
        <dbReference type="EC" id="1.2.1.12"/>
    </reaction>
</comment>
<comment type="pathway">
    <text evidence="3">Carbohydrate degradation; glycolysis; pyruvate from D-glyceraldehyde 3-phosphate: step 1/5.</text>
</comment>
<comment type="subunit">
    <text evidence="2">Homotetramer.</text>
</comment>
<comment type="subcellular location">
    <subcellularLocation>
        <location evidence="3">Cytoplasm</location>
    </subcellularLocation>
</comment>
<comment type="similarity">
    <text evidence="3">Belongs to the glyceraldehyde-3-phosphate dehydrogenase family.</text>
</comment>
<evidence type="ECO:0000250" key="1">
    <source>
        <dbReference type="UniProtKB" id="P00362"/>
    </source>
</evidence>
<evidence type="ECO:0000250" key="2">
    <source>
        <dbReference type="UniProtKB" id="Q6GIL8"/>
    </source>
</evidence>
<evidence type="ECO:0000305" key="3"/>
<proteinExistence type="inferred from homology"/>
<protein>
    <recommendedName>
        <fullName evidence="2">Glyceraldehyde-3-phosphate dehydrogenase 1</fullName>
        <shortName evidence="2">GAPDH 1</shortName>
        <ecNumber evidence="2">1.2.1.12</ecNumber>
    </recommendedName>
    <alternativeName>
        <fullName evidence="2">NAD-dependent glyceraldehyde-3-phosphate dehydrogenase</fullName>
    </alternativeName>
</protein>
<name>G3P1_STAES</name>
<feature type="chain" id="PRO_0000145689" description="Glyceraldehyde-3-phosphate dehydrogenase 1">
    <location>
        <begin position="1"/>
        <end position="336"/>
    </location>
</feature>
<feature type="active site" description="Nucleophile" evidence="2">
    <location>
        <position position="151"/>
    </location>
</feature>
<feature type="binding site" evidence="2">
    <location>
        <begin position="12"/>
        <end position="13"/>
    </location>
    <ligand>
        <name>NAD(+)</name>
        <dbReference type="ChEBI" id="CHEBI:57540"/>
    </ligand>
</feature>
<feature type="binding site" evidence="2">
    <location>
        <position position="34"/>
    </location>
    <ligand>
        <name>NAD(+)</name>
        <dbReference type="ChEBI" id="CHEBI:57540"/>
    </ligand>
</feature>
<feature type="binding site" evidence="2">
    <location>
        <position position="120"/>
    </location>
    <ligand>
        <name>NAD(+)</name>
        <dbReference type="ChEBI" id="CHEBI:57540"/>
    </ligand>
</feature>
<feature type="binding site" evidence="2">
    <location>
        <begin position="150"/>
        <end position="152"/>
    </location>
    <ligand>
        <name>D-glyceraldehyde 3-phosphate</name>
        <dbReference type="ChEBI" id="CHEBI:59776"/>
    </ligand>
</feature>
<feature type="binding site" evidence="2">
    <location>
        <position position="181"/>
    </location>
    <ligand>
        <name>D-glyceraldehyde 3-phosphate</name>
        <dbReference type="ChEBI" id="CHEBI:59776"/>
    </ligand>
</feature>
<feature type="binding site" evidence="1">
    <location>
        <position position="198"/>
    </location>
    <ligand>
        <name>D-glyceraldehyde 3-phosphate</name>
        <dbReference type="ChEBI" id="CHEBI:59776"/>
    </ligand>
</feature>
<feature type="binding site" evidence="2">
    <location>
        <begin position="211"/>
        <end position="212"/>
    </location>
    <ligand>
        <name>D-glyceraldehyde 3-phosphate</name>
        <dbReference type="ChEBI" id="CHEBI:59776"/>
    </ligand>
</feature>
<feature type="binding site" evidence="2">
    <location>
        <position position="234"/>
    </location>
    <ligand>
        <name>D-glyceraldehyde 3-phosphate</name>
        <dbReference type="ChEBI" id="CHEBI:59776"/>
    </ligand>
</feature>
<feature type="binding site" evidence="2">
    <location>
        <position position="316"/>
    </location>
    <ligand>
        <name>NAD(+)</name>
        <dbReference type="ChEBI" id="CHEBI:57540"/>
    </ligand>
</feature>
<feature type="site" description="Activates thiol group during catalysis" evidence="2">
    <location>
        <position position="178"/>
    </location>
</feature>
<gene>
    <name type="primary">gapA1</name>
    <name type="synonym">gap</name>
    <name type="synonym">gapA</name>
    <name type="ordered locus">SE_0557</name>
</gene>
<sequence>MAIKVAINGFGRIGRLAFRRIQDVEGLEVVAVNDLTDDDMLAHLLKYDTMQGRFTGEVEVIEGGFRVNGKEIKSFDEPDAGKLPWGDLDIDVVLECTGFYTDKEKAQAHIDAGAKKVLISAPAKGDVKTIVFNTNHDTLDGSETVVSGASCTTNSLAPVAKVLSDEFGLVEGFMTTIHAYTGDQNTQDAPHRKGDKRRARAAAENIIPNSTGAAKAIGKVIPEIDGKLDGGAQRVPVATGSLTELTVVLDKQDVTVDQVNSAMKQASDESFGYTEDEIVSSDIVGMTYGSLFDATQTRVMTVGDRQLVKVAAWYDNEMSYTAQLVRTLAHLAELSK</sequence>
<organism>
    <name type="scientific">Staphylococcus epidermidis (strain ATCC 12228 / FDA PCI 1200)</name>
    <dbReference type="NCBI Taxonomy" id="176280"/>
    <lineage>
        <taxon>Bacteria</taxon>
        <taxon>Bacillati</taxon>
        <taxon>Bacillota</taxon>
        <taxon>Bacilli</taxon>
        <taxon>Bacillales</taxon>
        <taxon>Staphylococcaceae</taxon>
        <taxon>Staphylococcus</taxon>
    </lineage>
</organism>
<dbReference type="EC" id="1.2.1.12" evidence="2"/>
<dbReference type="EMBL" id="AE015929">
    <property type="protein sequence ID" value="AAO04154.1"/>
    <property type="molecule type" value="Genomic_DNA"/>
</dbReference>
<dbReference type="RefSeq" id="NP_764112.1">
    <property type="nucleotide sequence ID" value="NC_004461.1"/>
</dbReference>
<dbReference type="RefSeq" id="WP_001829667.1">
    <property type="nucleotide sequence ID" value="NZ_WBME01000030.1"/>
</dbReference>
<dbReference type="SMR" id="Q8CPY5"/>
<dbReference type="GeneID" id="50019295"/>
<dbReference type="KEGG" id="sep:SE_0557"/>
<dbReference type="PATRIC" id="fig|176280.10.peg.528"/>
<dbReference type="eggNOG" id="COG0057">
    <property type="taxonomic scope" value="Bacteria"/>
</dbReference>
<dbReference type="HOGENOM" id="CLU_030140_0_2_9"/>
<dbReference type="OrthoDB" id="9803304at2"/>
<dbReference type="UniPathway" id="UPA00109">
    <property type="reaction ID" value="UER00184"/>
</dbReference>
<dbReference type="Proteomes" id="UP000001411">
    <property type="component" value="Chromosome"/>
</dbReference>
<dbReference type="GO" id="GO:0005737">
    <property type="term" value="C:cytoplasm"/>
    <property type="evidence" value="ECO:0007669"/>
    <property type="project" value="UniProtKB-SubCell"/>
</dbReference>
<dbReference type="GO" id="GO:0004365">
    <property type="term" value="F:glyceraldehyde-3-phosphate dehydrogenase (NAD+) (phosphorylating) activity"/>
    <property type="evidence" value="ECO:0000250"/>
    <property type="project" value="UniProtKB"/>
</dbReference>
<dbReference type="GO" id="GO:0051287">
    <property type="term" value="F:NAD binding"/>
    <property type="evidence" value="ECO:0000250"/>
    <property type="project" value="UniProtKB"/>
</dbReference>
<dbReference type="GO" id="GO:0050661">
    <property type="term" value="F:NADP binding"/>
    <property type="evidence" value="ECO:0007669"/>
    <property type="project" value="InterPro"/>
</dbReference>
<dbReference type="GO" id="GO:0006006">
    <property type="term" value="P:glucose metabolic process"/>
    <property type="evidence" value="ECO:0007669"/>
    <property type="project" value="InterPro"/>
</dbReference>
<dbReference type="GO" id="GO:0006096">
    <property type="term" value="P:glycolytic process"/>
    <property type="evidence" value="ECO:0007669"/>
    <property type="project" value="UniProtKB-UniPathway"/>
</dbReference>
<dbReference type="CDD" id="cd18126">
    <property type="entry name" value="GAPDH_I_C"/>
    <property type="match status" value="1"/>
</dbReference>
<dbReference type="CDD" id="cd05214">
    <property type="entry name" value="GAPDH_I_N"/>
    <property type="match status" value="1"/>
</dbReference>
<dbReference type="FunFam" id="3.30.360.10:FF:000002">
    <property type="entry name" value="Glyceraldehyde-3-phosphate dehydrogenase"/>
    <property type="match status" value="1"/>
</dbReference>
<dbReference type="FunFam" id="3.40.50.720:FF:000001">
    <property type="entry name" value="Glyceraldehyde-3-phosphate dehydrogenase"/>
    <property type="match status" value="1"/>
</dbReference>
<dbReference type="Gene3D" id="3.30.360.10">
    <property type="entry name" value="Dihydrodipicolinate Reductase, domain 2"/>
    <property type="match status" value="1"/>
</dbReference>
<dbReference type="Gene3D" id="3.40.50.720">
    <property type="entry name" value="NAD(P)-binding Rossmann-like Domain"/>
    <property type="match status" value="1"/>
</dbReference>
<dbReference type="InterPro" id="IPR020831">
    <property type="entry name" value="GlycerAld/Erythrose_P_DH"/>
</dbReference>
<dbReference type="InterPro" id="IPR020830">
    <property type="entry name" value="GlycerAld_3-P_DH_AS"/>
</dbReference>
<dbReference type="InterPro" id="IPR020829">
    <property type="entry name" value="GlycerAld_3-P_DH_cat"/>
</dbReference>
<dbReference type="InterPro" id="IPR020828">
    <property type="entry name" value="GlycerAld_3-P_DH_NAD(P)-bd"/>
</dbReference>
<dbReference type="InterPro" id="IPR006424">
    <property type="entry name" value="Glyceraldehyde-3-P_DH_1"/>
</dbReference>
<dbReference type="InterPro" id="IPR036291">
    <property type="entry name" value="NAD(P)-bd_dom_sf"/>
</dbReference>
<dbReference type="NCBIfam" id="TIGR01534">
    <property type="entry name" value="GAPDH-I"/>
    <property type="match status" value="1"/>
</dbReference>
<dbReference type="PANTHER" id="PTHR43148">
    <property type="entry name" value="GLYCERALDEHYDE-3-PHOSPHATE DEHYDROGENASE 2"/>
    <property type="match status" value="1"/>
</dbReference>
<dbReference type="Pfam" id="PF02800">
    <property type="entry name" value="Gp_dh_C"/>
    <property type="match status" value="1"/>
</dbReference>
<dbReference type="Pfam" id="PF00044">
    <property type="entry name" value="Gp_dh_N"/>
    <property type="match status" value="1"/>
</dbReference>
<dbReference type="PIRSF" id="PIRSF000149">
    <property type="entry name" value="GAP_DH"/>
    <property type="match status" value="1"/>
</dbReference>
<dbReference type="PRINTS" id="PR00078">
    <property type="entry name" value="G3PDHDRGNASE"/>
</dbReference>
<dbReference type="SMART" id="SM00846">
    <property type="entry name" value="Gp_dh_N"/>
    <property type="match status" value="1"/>
</dbReference>
<dbReference type="SUPFAM" id="SSF55347">
    <property type="entry name" value="Glyceraldehyde-3-phosphate dehydrogenase-like, C-terminal domain"/>
    <property type="match status" value="1"/>
</dbReference>
<dbReference type="SUPFAM" id="SSF51735">
    <property type="entry name" value="NAD(P)-binding Rossmann-fold domains"/>
    <property type="match status" value="1"/>
</dbReference>
<dbReference type="PROSITE" id="PS00071">
    <property type="entry name" value="GAPDH"/>
    <property type="match status" value="1"/>
</dbReference>
<accession>Q8CPY5</accession>